<dbReference type="EMBL" id="U00008">
    <property type="protein sequence ID" value="AAA16401.1"/>
    <property type="molecule type" value="Genomic_DNA"/>
</dbReference>
<dbReference type="EMBL" id="U00096">
    <property type="protein sequence ID" value="AAC75268.1"/>
    <property type="molecule type" value="Genomic_DNA"/>
</dbReference>
<dbReference type="EMBL" id="AP009048">
    <property type="protein sequence ID" value="BAA15991.1"/>
    <property type="molecule type" value="Genomic_DNA"/>
</dbReference>
<dbReference type="PIR" id="F64990">
    <property type="entry name" value="F64990"/>
</dbReference>
<dbReference type="RefSeq" id="NP_416712.1">
    <property type="nucleotide sequence ID" value="NC_000913.3"/>
</dbReference>
<dbReference type="RefSeq" id="WP_000686723.1">
    <property type="nucleotide sequence ID" value="NZ_SSZK01000027.1"/>
</dbReference>
<dbReference type="BioGRID" id="4262219">
    <property type="interactions" value="35"/>
</dbReference>
<dbReference type="FunCoup" id="P0AAL0">
    <property type="interactions" value="33"/>
</dbReference>
<dbReference type="STRING" id="511145.b2208"/>
<dbReference type="TCDB" id="3.D.11.1.1">
    <property type="family name" value="the periplasmic nitrate reductase complex (nap) complex family"/>
</dbReference>
<dbReference type="PaxDb" id="511145-b2208"/>
<dbReference type="EnsemblBacteria" id="AAC75268">
    <property type="protein sequence ID" value="AAC75268"/>
    <property type="gene ID" value="b2208"/>
</dbReference>
<dbReference type="GeneID" id="93774970"/>
<dbReference type="GeneID" id="946813"/>
<dbReference type="KEGG" id="ecj:JW2196"/>
<dbReference type="KEGG" id="eco:b2208"/>
<dbReference type="KEGG" id="ecoc:C3026_12335"/>
<dbReference type="PATRIC" id="fig|1411691.4.peg.28"/>
<dbReference type="EchoBASE" id="EB1995"/>
<dbReference type="eggNOG" id="COG1145">
    <property type="taxonomic scope" value="Bacteria"/>
</dbReference>
<dbReference type="eggNOG" id="COG1149">
    <property type="taxonomic scope" value="Bacteria"/>
</dbReference>
<dbReference type="HOGENOM" id="CLU_077329_2_1_6"/>
<dbReference type="InParanoid" id="P0AAL0"/>
<dbReference type="OMA" id="YQGIWCQ"/>
<dbReference type="OrthoDB" id="9808559at2"/>
<dbReference type="PhylomeDB" id="P0AAL0"/>
<dbReference type="BioCyc" id="EcoCyc:NAPF-MONOMER"/>
<dbReference type="PHI-base" id="PHI:10520"/>
<dbReference type="PRO" id="PR:P0AAL0"/>
<dbReference type="Proteomes" id="UP000000625">
    <property type="component" value="Chromosome"/>
</dbReference>
<dbReference type="GO" id="GO:0005737">
    <property type="term" value="C:cytoplasm"/>
    <property type="evidence" value="ECO:0000314"/>
    <property type="project" value="EcoCyc"/>
</dbReference>
<dbReference type="GO" id="GO:0051539">
    <property type="term" value="F:4 iron, 4 sulfur cluster binding"/>
    <property type="evidence" value="ECO:0007669"/>
    <property type="project" value="UniProtKB-UniRule"/>
</dbReference>
<dbReference type="GO" id="GO:0046872">
    <property type="term" value="F:metal ion binding"/>
    <property type="evidence" value="ECO:0007669"/>
    <property type="project" value="UniProtKB-KW"/>
</dbReference>
<dbReference type="GO" id="GO:0006979">
    <property type="term" value="P:response to oxidative stress"/>
    <property type="evidence" value="ECO:0000315"/>
    <property type="project" value="EcoCyc"/>
</dbReference>
<dbReference type="CDD" id="cd10564">
    <property type="entry name" value="NapF_like"/>
    <property type="match status" value="1"/>
</dbReference>
<dbReference type="FunFam" id="3.30.70.20:FF:000024">
    <property type="entry name" value="Ferredoxin-type protein NapF"/>
    <property type="match status" value="1"/>
</dbReference>
<dbReference type="FunFam" id="3.30.70.20:FF:000025">
    <property type="entry name" value="Ferredoxin-type protein NapF"/>
    <property type="match status" value="1"/>
</dbReference>
<dbReference type="Gene3D" id="3.30.70.20">
    <property type="match status" value="2"/>
</dbReference>
<dbReference type="HAMAP" id="MF_02201">
    <property type="entry name" value="NapF"/>
    <property type="match status" value="1"/>
</dbReference>
<dbReference type="InterPro" id="IPR017896">
    <property type="entry name" value="4Fe4S_Fe-S-bd"/>
</dbReference>
<dbReference type="InterPro" id="IPR017900">
    <property type="entry name" value="4Fe4S_Fe_S_CS"/>
</dbReference>
<dbReference type="InterPro" id="IPR050572">
    <property type="entry name" value="Fe-S_Ferredoxin"/>
</dbReference>
<dbReference type="InterPro" id="IPR004496">
    <property type="entry name" value="NapF"/>
</dbReference>
<dbReference type="NCBIfam" id="TIGR00402">
    <property type="entry name" value="napF"/>
    <property type="match status" value="1"/>
</dbReference>
<dbReference type="PANTHER" id="PTHR43687">
    <property type="entry name" value="ADENYLYLSULFATE REDUCTASE, BETA SUBUNIT"/>
    <property type="match status" value="1"/>
</dbReference>
<dbReference type="PANTHER" id="PTHR43687:SF1">
    <property type="entry name" value="FERREDOXIN III"/>
    <property type="match status" value="1"/>
</dbReference>
<dbReference type="Pfam" id="PF12838">
    <property type="entry name" value="Fer4_7"/>
    <property type="match status" value="1"/>
</dbReference>
<dbReference type="Pfam" id="PF13187">
    <property type="entry name" value="Fer4_9"/>
    <property type="match status" value="1"/>
</dbReference>
<dbReference type="SUPFAM" id="SSF54862">
    <property type="entry name" value="4Fe-4S ferredoxins"/>
    <property type="match status" value="1"/>
</dbReference>
<dbReference type="PROSITE" id="PS00198">
    <property type="entry name" value="4FE4S_FER_1"/>
    <property type="match status" value="3"/>
</dbReference>
<dbReference type="PROSITE" id="PS51379">
    <property type="entry name" value="4FE4S_FER_2"/>
    <property type="match status" value="3"/>
</dbReference>
<accession>P0AAL0</accession>
<accession>P33939</accession>
<name>NAPF_ECOLI</name>
<gene>
    <name evidence="1" type="primary">napF</name>
    <name type="synonym">yojG</name>
    <name type="ordered locus">b2208</name>
    <name type="ordered locus">JW2196</name>
</gene>
<keyword id="KW-0004">4Fe-4S</keyword>
<keyword id="KW-0963">Cytoplasm</keyword>
<keyword id="KW-0903">Direct protein sequencing</keyword>
<keyword id="KW-0408">Iron</keyword>
<keyword id="KW-0411">Iron-sulfur</keyword>
<keyword id="KW-0479">Metal-binding</keyword>
<keyword id="KW-1185">Reference proteome</keyword>
<keyword id="KW-0677">Repeat</keyword>
<sequence length="164" mass="18047">MKIDASRRGILTGRWRKASNGIRPPWSGDESHFLTHCTRCDACINACENNILQRGAGGYPSVNFKNNECSFCYACAQACPESLFSPRHTRAWDLQFTIGDACLAYQSVECRRCQDSCEPMAIIFRPTLSGIYQPQLNSQLCNGCGACAASCPVSAITAEYLHAH</sequence>
<protein>
    <recommendedName>
        <fullName evidence="1 5">Ferredoxin-type protein NapF</fullName>
    </recommendedName>
</protein>
<comment type="function">
    <text evidence="3 4">Could be involved in the maturation of NapA, the catalytic subunit of the periplasmic nitrate reductase, before its export into the periplasm (PubMed:17074894). Is not involved in the electron transfer from menaquinol or ubiquinol to the periplasmic nitrate reductase (PubMed:11967083).</text>
</comment>
<comment type="cofactor">
    <cofactor evidence="1 2">
        <name>[4Fe-4S] cluster</name>
        <dbReference type="ChEBI" id="CHEBI:49883"/>
    </cofactor>
    <text evidence="2">Binds 3 [4Fe-4S] cluster.</text>
</comment>
<comment type="subunit">
    <text evidence="1 4">Interacts with the cytoplasmic NapA precursor.</text>
</comment>
<comment type="subcellular location">
    <subcellularLocation>
        <location evidence="4">Cytoplasm</location>
    </subcellularLocation>
    <text evidence="4">Loosely attached to the inner side of the membrane.</text>
</comment>
<comment type="disruption phenotype">
    <text evidence="3">Deletion of the gene does not decrease the rate of electron transfer from physiological substrates to the Nap complex, but it has a significant effect on cell energetics.</text>
</comment>
<comment type="similarity">
    <text evidence="1 5">Belongs to the NapF family.</text>
</comment>
<feature type="chain" id="PRO_0000159275" description="Ferredoxin-type protein NapF">
    <location>
        <begin position="1"/>
        <end position="164"/>
    </location>
</feature>
<feature type="domain" description="4Fe-4S ferredoxin-type 1" evidence="1 2">
    <location>
        <begin position="28"/>
        <end position="57"/>
    </location>
</feature>
<feature type="domain" description="4Fe-4S ferredoxin-type 2" evidence="1 2">
    <location>
        <begin position="58"/>
        <end position="89"/>
    </location>
</feature>
<feature type="domain" description="4Fe-4S ferredoxin-type 3" evidence="1 2">
    <location>
        <begin position="132"/>
        <end position="161"/>
    </location>
</feature>
<feature type="binding site" evidence="1 2">
    <location>
        <position position="37"/>
    </location>
    <ligand>
        <name>[4Fe-4S] cluster</name>
        <dbReference type="ChEBI" id="CHEBI:49883"/>
        <label>1</label>
    </ligand>
</feature>
<feature type="binding site" evidence="1 2">
    <location>
        <position position="40"/>
    </location>
    <ligand>
        <name>[4Fe-4S] cluster</name>
        <dbReference type="ChEBI" id="CHEBI:49883"/>
        <label>1</label>
    </ligand>
</feature>
<feature type="binding site" evidence="1 2">
    <location>
        <position position="43"/>
    </location>
    <ligand>
        <name>[4Fe-4S] cluster</name>
        <dbReference type="ChEBI" id="CHEBI:49883"/>
        <label>1</label>
    </ligand>
</feature>
<feature type="binding site" evidence="1 2">
    <location>
        <position position="47"/>
    </location>
    <ligand>
        <name>[4Fe-4S] cluster</name>
        <dbReference type="ChEBI" id="CHEBI:49883"/>
        <label>1</label>
    </ligand>
</feature>
<feature type="binding site" evidence="1 2">
    <location>
        <position position="69"/>
    </location>
    <ligand>
        <name>[4Fe-4S] cluster</name>
        <dbReference type="ChEBI" id="CHEBI:49883"/>
        <label>2</label>
    </ligand>
</feature>
<feature type="binding site" evidence="1 2">
    <location>
        <position position="72"/>
    </location>
    <ligand>
        <name>[4Fe-4S] cluster</name>
        <dbReference type="ChEBI" id="CHEBI:49883"/>
        <label>2</label>
    </ligand>
</feature>
<feature type="binding site" evidence="1 2">
    <location>
        <position position="75"/>
    </location>
    <ligand>
        <name>[4Fe-4S] cluster</name>
        <dbReference type="ChEBI" id="CHEBI:49883"/>
        <label>2</label>
    </ligand>
</feature>
<feature type="binding site" evidence="1 2">
    <location>
        <position position="79"/>
    </location>
    <ligand>
        <name>[4Fe-4S] cluster</name>
        <dbReference type="ChEBI" id="CHEBI:49883"/>
        <label>2</label>
    </ligand>
</feature>
<feature type="binding site" evidence="1 2">
    <location>
        <position position="141"/>
    </location>
    <ligand>
        <name>[4Fe-4S] cluster</name>
        <dbReference type="ChEBI" id="CHEBI:49883"/>
        <label>3</label>
    </ligand>
</feature>
<feature type="binding site" evidence="1 2">
    <location>
        <position position="144"/>
    </location>
    <ligand>
        <name>[4Fe-4S] cluster</name>
        <dbReference type="ChEBI" id="CHEBI:49883"/>
        <label>3</label>
    </ligand>
</feature>
<feature type="binding site" evidence="1 2">
    <location>
        <position position="147"/>
    </location>
    <ligand>
        <name>[4Fe-4S] cluster</name>
        <dbReference type="ChEBI" id="CHEBI:49883"/>
        <label>3</label>
    </ligand>
</feature>
<feature type="binding site" evidence="1 2">
    <location>
        <position position="151"/>
    </location>
    <ligand>
        <name>[4Fe-4S] cluster</name>
        <dbReference type="ChEBI" id="CHEBI:49883"/>
        <label>3</label>
    </ligand>
</feature>
<feature type="mutagenesis site" description="No change in activity." evidence="4">
    <original>RR</original>
    <variation>AA</variation>
    <location>
        <begin position="7"/>
        <end position="8"/>
    </location>
</feature>
<feature type="mutagenesis site" description="No change in activity." evidence="4">
    <original>P</original>
    <variation>A</variation>
    <location>
        <position position="24"/>
    </location>
</feature>
<feature type="mutagenesis site" description="No change in activity." evidence="4">
    <original>P</original>
    <variation>A</variation>
    <location>
        <position position="25"/>
    </location>
</feature>
<feature type="mutagenesis site" description="No change in activity." evidence="4">
    <original>W</original>
    <variation>Y</variation>
    <location>
        <position position="26"/>
    </location>
</feature>
<proteinExistence type="evidence at protein level"/>
<organism>
    <name type="scientific">Escherichia coli (strain K12)</name>
    <dbReference type="NCBI Taxonomy" id="83333"/>
    <lineage>
        <taxon>Bacteria</taxon>
        <taxon>Pseudomonadati</taxon>
        <taxon>Pseudomonadota</taxon>
        <taxon>Gammaproteobacteria</taxon>
        <taxon>Enterobacterales</taxon>
        <taxon>Enterobacteriaceae</taxon>
        <taxon>Escherichia</taxon>
    </lineage>
</organism>
<evidence type="ECO:0000255" key="1">
    <source>
        <dbReference type="HAMAP-Rule" id="MF_02201"/>
    </source>
</evidence>
<evidence type="ECO:0000255" key="2">
    <source>
        <dbReference type="PROSITE-ProRule" id="PRU00711"/>
    </source>
</evidence>
<evidence type="ECO:0000269" key="3">
    <source>
    </source>
</evidence>
<evidence type="ECO:0000269" key="4">
    <source>
    </source>
</evidence>
<evidence type="ECO:0000305" key="5"/>
<reference key="1">
    <citation type="submission" date="1993-10" db="EMBL/GenBank/DDBJ databases">
        <title>Automated multiplex sequencing of the E.coli genome.</title>
        <authorList>
            <person name="Richterich P."/>
            <person name="Lakey N."/>
            <person name="Gryan G."/>
            <person name="Jaehn L."/>
            <person name="Mintz L."/>
            <person name="Robison K."/>
            <person name="Church G.M."/>
        </authorList>
    </citation>
    <scope>NUCLEOTIDE SEQUENCE [LARGE SCALE GENOMIC DNA]</scope>
    <source>
        <strain>K12 / BHB2600</strain>
    </source>
</reference>
<reference key="2">
    <citation type="journal article" date="1996" name="DNA Res.">
        <title>A 460-kb DNA sequence of the Escherichia coli K-12 genome corresponding to the 40.1-50.0 min region on the linkage map.</title>
        <authorList>
            <person name="Itoh T."/>
            <person name="Aiba H."/>
            <person name="Baba T."/>
            <person name="Fujita K."/>
            <person name="Hayashi K."/>
            <person name="Inada T."/>
            <person name="Isono K."/>
            <person name="Kasai H."/>
            <person name="Kimura S."/>
            <person name="Kitakawa M."/>
            <person name="Kitagawa M."/>
            <person name="Makino K."/>
            <person name="Miki T."/>
            <person name="Mizobuchi K."/>
            <person name="Mori H."/>
            <person name="Mori T."/>
            <person name="Motomura K."/>
            <person name="Nakade S."/>
            <person name="Nakamura Y."/>
            <person name="Nashimoto H."/>
            <person name="Nishio Y."/>
            <person name="Oshima T."/>
            <person name="Saito N."/>
            <person name="Sampei G."/>
            <person name="Seki Y."/>
            <person name="Sivasundaram S."/>
            <person name="Tagami H."/>
            <person name="Takeda J."/>
            <person name="Takemoto K."/>
            <person name="Wada C."/>
            <person name="Yamamoto Y."/>
            <person name="Horiuchi T."/>
        </authorList>
    </citation>
    <scope>NUCLEOTIDE SEQUENCE [LARGE SCALE GENOMIC DNA]</scope>
    <source>
        <strain>K12 / W3110 / ATCC 27325 / DSM 5911</strain>
    </source>
</reference>
<reference key="3">
    <citation type="journal article" date="1997" name="Science">
        <title>The complete genome sequence of Escherichia coli K-12.</title>
        <authorList>
            <person name="Blattner F.R."/>
            <person name="Plunkett G. III"/>
            <person name="Bloch C.A."/>
            <person name="Perna N.T."/>
            <person name="Burland V."/>
            <person name="Riley M."/>
            <person name="Collado-Vides J."/>
            <person name="Glasner J.D."/>
            <person name="Rode C.K."/>
            <person name="Mayhew G.F."/>
            <person name="Gregor J."/>
            <person name="Davis N.W."/>
            <person name="Kirkpatrick H.A."/>
            <person name="Goeden M.A."/>
            <person name="Rose D.J."/>
            <person name="Mau B."/>
            <person name="Shao Y."/>
        </authorList>
    </citation>
    <scope>NUCLEOTIDE SEQUENCE [LARGE SCALE GENOMIC DNA]</scope>
    <source>
        <strain>K12 / MG1655 / ATCC 47076</strain>
    </source>
</reference>
<reference key="4">
    <citation type="journal article" date="2006" name="Mol. Syst. Biol.">
        <title>Highly accurate genome sequences of Escherichia coli K-12 strains MG1655 and W3110.</title>
        <authorList>
            <person name="Hayashi K."/>
            <person name="Morooka N."/>
            <person name="Yamamoto Y."/>
            <person name="Fujita K."/>
            <person name="Isono K."/>
            <person name="Choi S."/>
            <person name="Ohtsubo E."/>
            <person name="Baba T."/>
            <person name="Wanner B.L."/>
            <person name="Mori H."/>
            <person name="Horiuchi T."/>
        </authorList>
    </citation>
    <scope>NUCLEOTIDE SEQUENCE [LARGE SCALE GENOMIC DNA]</scope>
    <source>
        <strain>K12 / W3110 / ATCC 27325 / DSM 5911</strain>
    </source>
</reference>
<reference key="5">
    <citation type="journal article" date="2006" name="Microbiology">
        <title>The NapF protein of the Escherichia coli periplasmic nitrate reductase system: demonstration of a cytoplasmic location and interaction with the catalytic subunit, NapA.</title>
        <authorList>
            <person name="Nilavongse A."/>
            <person name="Brondijk T.H."/>
            <person name="Overton T.W."/>
            <person name="Richardson D.J."/>
            <person name="Leach E.R."/>
            <person name="Cole J.A."/>
        </authorList>
    </citation>
    <scope>PROTEIN SEQUENCE OF 1-5</scope>
    <scope>FUNCTION</scope>
    <scope>INTERACTION WITH NAPA</scope>
    <scope>SUBCELLULAR LOCATION</scope>
    <scope>MUTAGENESIS OF 7-ARG-ARG-8; PRO-24; PRO-25 AND TRP-26</scope>
    <source>
        <strain>K12</strain>
    </source>
</reference>
<reference key="6">
    <citation type="journal article" date="2002" name="Mol. Microbiol.">
        <title>Roles of NapF, NapG and NapH, subunits of the Escherichia coli periplasmic nitrate reductase, in ubiquinol oxidation.</title>
        <authorList>
            <person name="Brondijk T.H."/>
            <person name="Fiegen D."/>
            <person name="Richardson D.J."/>
            <person name="Cole J.A."/>
        </authorList>
    </citation>
    <scope>FUNCTION</scope>
    <scope>DISRUPTION PHENOTYPE</scope>
</reference>